<dbReference type="EMBL" id="U00090">
    <property type="protein sequence ID" value="AAB91709.1"/>
    <property type="molecule type" value="Genomic_DNA"/>
</dbReference>
<dbReference type="RefSeq" id="NP_443907.1">
    <property type="nucleotide sequence ID" value="NC_000914.2"/>
</dbReference>
<dbReference type="KEGG" id="rhi:NGR_a03190"/>
<dbReference type="HOGENOM" id="CLU_1320055_0_0_5"/>
<dbReference type="Proteomes" id="UP000001054">
    <property type="component" value="Plasmid pNGR234a"/>
</dbReference>
<reference key="1">
    <citation type="journal article" date="1997" name="Nature">
        <title>Molecular basis of symbiosis between Rhizobium and legumes.</title>
        <authorList>
            <person name="Freiberg C.A."/>
            <person name="Fellay R."/>
            <person name="Bairoch A."/>
            <person name="Broughton W.J."/>
            <person name="Rosenthal A."/>
            <person name="Perret X."/>
        </authorList>
    </citation>
    <scope>NUCLEOTIDE SEQUENCE [LARGE SCALE GENOMIC DNA]</scope>
    <source>
        <strain>NBRC 101917 / NGR234</strain>
    </source>
</reference>
<reference key="2">
    <citation type="journal article" date="2009" name="Appl. Environ. Microbiol.">
        <title>Rhizobium sp. strain NGR234 possesses a remarkable number of secretion systems.</title>
        <authorList>
            <person name="Schmeisser C."/>
            <person name="Liesegang H."/>
            <person name="Krysciak D."/>
            <person name="Bakkou N."/>
            <person name="Le Quere A."/>
            <person name="Wollherr A."/>
            <person name="Heinemeyer I."/>
            <person name="Morgenstern B."/>
            <person name="Pommerening-Roeser A."/>
            <person name="Flores M."/>
            <person name="Palacios R."/>
            <person name="Brenner S."/>
            <person name="Gottschalk G."/>
            <person name="Schmitz R.A."/>
            <person name="Broughton W.J."/>
            <person name="Perret X."/>
            <person name="Strittmatter A.W."/>
            <person name="Streit W.R."/>
        </authorList>
    </citation>
    <scope>NUCLEOTIDE SEQUENCE [LARGE SCALE GENOMIC DNA]</scope>
    <source>
        <strain>NBRC 101917 / NGR234</strain>
    </source>
</reference>
<evidence type="ECO:0000255" key="1"/>
<feature type="signal peptide" evidence="1">
    <location>
        <begin position="1"/>
        <end position="34"/>
    </location>
</feature>
<feature type="chain" id="PRO_0000014167" description="Uncharacterized protein y4iN">
    <location>
        <begin position="35"/>
        <end position="208"/>
    </location>
</feature>
<sequence>MPSHCRERLPFALHFFAVAYGASLWILGSHGLAAANPACSARDDLSANMTISWTEIRAGCDAERTAYREQNPVGSSWFANAGNGFTGAPYLLQRVLPDLAPEIWGRNDENFGRFGFFPDPDDKSRPLPLGLGIASTAGRPLDAGGNPLGEIDFAKPGLDVVTLACGPHWTGTDAGWTGGRRGCAEHEDGRAQVAGCLLANGDSLLLHP</sequence>
<organism>
    <name type="scientific">Sinorhizobium fredii (strain NBRC 101917 / NGR234)</name>
    <dbReference type="NCBI Taxonomy" id="394"/>
    <lineage>
        <taxon>Bacteria</taxon>
        <taxon>Pseudomonadati</taxon>
        <taxon>Pseudomonadota</taxon>
        <taxon>Alphaproteobacteria</taxon>
        <taxon>Hyphomicrobiales</taxon>
        <taxon>Rhizobiaceae</taxon>
        <taxon>Sinorhizobium/Ensifer group</taxon>
        <taxon>Sinorhizobium</taxon>
    </lineage>
</organism>
<protein>
    <recommendedName>
        <fullName>Uncharacterized protein y4iN</fullName>
    </recommendedName>
</protein>
<keyword id="KW-0614">Plasmid</keyword>
<keyword id="KW-1185">Reference proteome</keyword>
<keyword id="KW-0732">Signal</keyword>
<gene>
    <name type="ordered locus">NGR_a03190</name>
    <name type="ORF">y4iN</name>
</gene>
<proteinExistence type="inferred from homology"/>
<geneLocation type="plasmid">
    <name>sym pNGR234a</name>
</geneLocation>
<name>Y4IN_SINFN</name>
<accession>P55497</accession>